<feature type="chain" id="PRO_0000095674" description="RNA-binding protein Hfq">
    <location>
        <begin position="1"/>
        <end position="92"/>
    </location>
</feature>
<feature type="domain" description="Sm" evidence="2">
    <location>
        <begin position="9"/>
        <end position="68"/>
    </location>
</feature>
<name>HFQ_XYLFT</name>
<reference key="1">
    <citation type="journal article" date="2003" name="J. Bacteriol.">
        <title>Comparative analyses of the complete genome sequences of Pierce's disease and citrus variegated chlorosis strains of Xylella fastidiosa.</title>
        <authorList>
            <person name="Van Sluys M.A."/>
            <person name="de Oliveira M.C."/>
            <person name="Monteiro-Vitorello C.B."/>
            <person name="Miyaki C.Y."/>
            <person name="Furlan L.R."/>
            <person name="Camargo L.E.A."/>
            <person name="da Silva A.C.R."/>
            <person name="Moon D.H."/>
            <person name="Takita M.A."/>
            <person name="Lemos E.G.M."/>
            <person name="Machado M.A."/>
            <person name="Ferro M.I.T."/>
            <person name="da Silva F.R."/>
            <person name="Goldman M.H.S."/>
            <person name="Goldman G.H."/>
            <person name="Lemos M.V.F."/>
            <person name="El-Dorry H."/>
            <person name="Tsai S.M."/>
            <person name="Carrer H."/>
            <person name="Carraro D.M."/>
            <person name="de Oliveira R.C."/>
            <person name="Nunes L.R."/>
            <person name="Siqueira W.J."/>
            <person name="Coutinho L.L."/>
            <person name="Kimura E.T."/>
            <person name="Ferro E.S."/>
            <person name="Harakava R."/>
            <person name="Kuramae E.E."/>
            <person name="Marino C.L."/>
            <person name="Giglioti E."/>
            <person name="Abreu I.L."/>
            <person name="Alves L.M.C."/>
            <person name="do Amaral A.M."/>
            <person name="Baia G.S."/>
            <person name="Blanco S.R."/>
            <person name="Brito M.S."/>
            <person name="Cannavan F.S."/>
            <person name="Celestino A.V."/>
            <person name="da Cunha A.F."/>
            <person name="Fenille R.C."/>
            <person name="Ferro J.A."/>
            <person name="Formighieri E.F."/>
            <person name="Kishi L.T."/>
            <person name="Leoni S.G."/>
            <person name="Oliveira A.R."/>
            <person name="Rosa V.E. Jr."/>
            <person name="Sassaki F.T."/>
            <person name="Sena J.A.D."/>
            <person name="de Souza A.A."/>
            <person name="Truffi D."/>
            <person name="Tsukumo F."/>
            <person name="Yanai G.M."/>
            <person name="Zaros L.G."/>
            <person name="Civerolo E.L."/>
            <person name="Simpson A.J.G."/>
            <person name="Almeida N.F. Jr."/>
            <person name="Setubal J.C."/>
            <person name="Kitajima J.P."/>
        </authorList>
    </citation>
    <scope>NUCLEOTIDE SEQUENCE [LARGE SCALE GENOMIC DNA]</scope>
    <source>
        <strain>Temecula1 / ATCC 700964</strain>
    </source>
</reference>
<dbReference type="EMBL" id="AE009442">
    <property type="protein sequence ID" value="AAO27966.1"/>
    <property type="molecule type" value="Genomic_DNA"/>
</dbReference>
<dbReference type="RefSeq" id="WP_004085558.1">
    <property type="nucleotide sequence ID" value="NC_004556.1"/>
</dbReference>
<dbReference type="SMR" id="Q87F71"/>
<dbReference type="GeneID" id="93903758"/>
<dbReference type="KEGG" id="xft:PD_0066"/>
<dbReference type="HOGENOM" id="CLU_113688_2_0_6"/>
<dbReference type="Proteomes" id="UP000002516">
    <property type="component" value="Chromosome"/>
</dbReference>
<dbReference type="GO" id="GO:0005829">
    <property type="term" value="C:cytosol"/>
    <property type="evidence" value="ECO:0007669"/>
    <property type="project" value="TreeGrafter"/>
</dbReference>
<dbReference type="GO" id="GO:0003723">
    <property type="term" value="F:RNA binding"/>
    <property type="evidence" value="ECO:0007669"/>
    <property type="project" value="UniProtKB-UniRule"/>
</dbReference>
<dbReference type="GO" id="GO:0006355">
    <property type="term" value="P:regulation of DNA-templated transcription"/>
    <property type="evidence" value="ECO:0007669"/>
    <property type="project" value="InterPro"/>
</dbReference>
<dbReference type="GO" id="GO:0043487">
    <property type="term" value="P:regulation of RNA stability"/>
    <property type="evidence" value="ECO:0007669"/>
    <property type="project" value="TreeGrafter"/>
</dbReference>
<dbReference type="GO" id="GO:0045974">
    <property type="term" value="P:regulation of translation, ncRNA-mediated"/>
    <property type="evidence" value="ECO:0007669"/>
    <property type="project" value="TreeGrafter"/>
</dbReference>
<dbReference type="CDD" id="cd01716">
    <property type="entry name" value="Hfq"/>
    <property type="match status" value="1"/>
</dbReference>
<dbReference type="FunFam" id="2.30.30.100:FF:000001">
    <property type="entry name" value="RNA-binding protein Hfq"/>
    <property type="match status" value="1"/>
</dbReference>
<dbReference type="Gene3D" id="2.30.30.100">
    <property type="match status" value="1"/>
</dbReference>
<dbReference type="HAMAP" id="MF_00436">
    <property type="entry name" value="Hfq"/>
    <property type="match status" value="1"/>
</dbReference>
<dbReference type="InterPro" id="IPR005001">
    <property type="entry name" value="Hfq"/>
</dbReference>
<dbReference type="InterPro" id="IPR010920">
    <property type="entry name" value="LSM_dom_sf"/>
</dbReference>
<dbReference type="InterPro" id="IPR047575">
    <property type="entry name" value="Sm"/>
</dbReference>
<dbReference type="NCBIfam" id="TIGR02383">
    <property type="entry name" value="Hfq"/>
    <property type="match status" value="1"/>
</dbReference>
<dbReference type="NCBIfam" id="NF001602">
    <property type="entry name" value="PRK00395.1"/>
    <property type="match status" value="1"/>
</dbReference>
<dbReference type="PANTHER" id="PTHR34772">
    <property type="entry name" value="RNA-BINDING PROTEIN HFQ"/>
    <property type="match status" value="1"/>
</dbReference>
<dbReference type="PANTHER" id="PTHR34772:SF1">
    <property type="entry name" value="RNA-BINDING PROTEIN HFQ"/>
    <property type="match status" value="1"/>
</dbReference>
<dbReference type="Pfam" id="PF17209">
    <property type="entry name" value="Hfq"/>
    <property type="match status" value="1"/>
</dbReference>
<dbReference type="SUPFAM" id="SSF50182">
    <property type="entry name" value="Sm-like ribonucleoproteins"/>
    <property type="match status" value="1"/>
</dbReference>
<dbReference type="PROSITE" id="PS52002">
    <property type="entry name" value="SM"/>
    <property type="match status" value="1"/>
</dbReference>
<sequence>MAKGQSLQDPFLNALRRERVPVSVYLVNGIKLQGTIESFDQFVVLLRNTVSQMVYKHAISTVVPARNVRVGPGGGYVHSGSDTLQINDDEVE</sequence>
<protein>
    <recommendedName>
        <fullName evidence="1">RNA-binding protein Hfq</fullName>
    </recommendedName>
</protein>
<proteinExistence type="inferred from homology"/>
<comment type="function">
    <text evidence="1">RNA chaperone that binds small regulatory RNA (sRNAs) and mRNAs to facilitate mRNA translational regulation in response to envelope stress, environmental stress and changes in metabolite concentrations. Also binds with high specificity to tRNAs.</text>
</comment>
<comment type="subunit">
    <text evidence="1">Homohexamer.</text>
</comment>
<comment type="similarity">
    <text evidence="1">Belongs to the Hfq family.</text>
</comment>
<organism>
    <name type="scientific">Xylella fastidiosa (strain Temecula1 / ATCC 700964)</name>
    <dbReference type="NCBI Taxonomy" id="183190"/>
    <lineage>
        <taxon>Bacteria</taxon>
        <taxon>Pseudomonadati</taxon>
        <taxon>Pseudomonadota</taxon>
        <taxon>Gammaproteobacteria</taxon>
        <taxon>Lysobacterales</taxon>
        <taxon>Lysobacteraceae</taxon>
        <taxon>Xylella</taxon>
    </lineage>
</organism>
<evidence type="ECO:0000255" key="1">
    <source>
        <dbReference type="HAMAP-Rule" id="MF_00436"/>
    </source>
</evidence>
<evidence type="ECO:0000255" key="2">
    <source>
        <dbReference type="PROSITE-ProRule" id="PRU01346"/>
    </source>
</evidence>
<accession>Q87F71</accession>
<keyword id="KW-1185">Reference proteome</keyword>
<keyword id="KW-0694">RNA-binding</keyword>
<keyword id="KW-0346">Stress response</keyword>
<gene>
    <name evidence="1" type="primary">hfq</name>
    <name type="ordered locus">PD_0066</name>
</gene>